<organism>
    <name type="scientific">Mus musculus</name>
    <name type="common">Mouse</name>
    <dbReference type="NCBI Taxonomy" id="10090"/>
    <lineage>
        <taxon>Eukaryota</taxon>
        <taxon>Metazoa</taxon>
        <taxon>Chordata</taxon>
        <taxon>Craniata</taxon>
        <taxon>Vertebrata</taxon>
        <taxon>Euteleostomi</taxon>
        <taxon>Mammalia</taxon>
        <taxon>Eutheria</taxon>
        <taxon>Euarchontoglires</taxon>
        <taxon>Glires</taxon>
        <taxon>Rodentia</taxon>
        <taxon>Myomorpha</taxon>
        <taxon>Muroidea</taxon>
        <taxon>Muridae</taxon>
        <taxon>Murinae</taxon>
        <taxon>Mus</taxon>
        <taxon>Mus</taxon>
    </lineage>
</organism>
<gene>
    <name type="primary">Ssr2</name>
</gene>
<keyword id="KW-0256">Endoplasmic reticulum</keyword>
<keyword id="KW-0325">Glycoprotein</keyword>
<keyword id="KW-0472">Membrane</keyword>
<keyword id="KW-1185">Reference proteome</keyword>
<keyword id="KW-0732">Signal</keyword>
<keyword id="KW-0812">Transmembrane</keyword>
<keyword id="KW-1133">Transmembrane helix</keyword>
<accession>Q9CPW5</accession>
<accession>Q91Z43</accession>
<accession>Q9CR94</accession>
<accession>Q9CX54</accession>
<feature type="signal peptide" evidence="1">
    <location>
        <begin position="1"/>
        <end position="17"/>
    </location>
</feature>
<feature type="chain" id="PRO_0000033291" description="Translocon-associated protein subunit beta">
    <location>
        <begin position="18"/>
        <end position="183"/>
    </location>
</feature>
<feature type="topological domain" description="Lumenal" evidence="2">
    <location>
        <begin position="18"/>
        <end position="146"/>
    </location>
</feature>
<feature type="transmembrane region" description="Helical" evidence="2">
    <location>
        <begin position="147"/>
        <end position="167"/>
    </location>
</feature>
<feature type="topological domain" description="Cytoplasmic" evidence="2">
    <location>
        <begin position="168"/>
        <end position="183"/>
    </location>
</feature>
<feature type="glycosylation site" description="N-linked (GlcNAc...) (high mannose) asparagine" evidence="3 4">
    <location>
        <position position="88"/>
    </location>
</feature>
<feature type="glycosylation site" description="N-linked (GlcNAc...) asparagine" evidence="2">
    <location>
        <position position="104"/>
    </location>
</feature>
<feature type="sequence conflict" description="In Ref. 1; BAB32009." evidence="5" ref="1">
    <original>G</original>
    <variation>E</variation>
    <location>
        <position position="132"/>
    </location>
</feature>
<feature type="sequence conflict" description="In Ref. 2; AAH10214." evidence="5" ref="2">
    <original>I</original>
    <variation>M</variation>
    <location>
        <position position="163"/>
    </location>
</feature>
<comment type="function">
    <text>TRAP proteins are part of a complex whose function is to bind calcium to the ER membrane and thereby regulate the retention of ER resident proteins.</text>
</comment>
<comment type="subunit">
    <text evidence="1">Heterotetramer of TRAP-alpha, TRAP-beta, TRAP-delta and TRAP-gamma. Interacts with STING1 (By similarity).</text>
</comment>
<comment type="subcellular location">
    <subcellularLocation>
        <location evidence="1">Endoplasmic reticulum membrane</location>
        <topology evidence="1">Single-pass type I membrane protein</topology>
    </subcellularLocation>
</comment>
<comment type="similarity">
    <text evidence="5">Belongs to the TRAP-beta family.</text>
</comment>
<evidence type="ECO:0000250" key="1"/>
<evidence type="ECO:0000255" key="2"/>
<evidence type="ECO:0000269" key="3">
    <source>
    </source>
</evidence>
<evidence type="ECO:0000269" key="4">
    <source>
    </source>
</evidence>
<evidence type="ECO:0000305" key="5"/>
<sequence length="183" mass="20019">MRLLAVVVLALLAVSQAEEGARLLASKSLLNRYAVEGRDLTLQYNIYNVGSSAALDVELSDDSFPPEDFGIVSGMLNVKWDRIAPASNVSHTVVLRPLKAGYFNFTSATITYLAQEDGPVVIGSTSAPGQGGILAQREFDRRFSPHFLDWAAFGVMTLPSIGIPLLLWYSSKRKYDTPKPKKN</sequence>
<dbReference type="EMBL" id="AK005340">
    <property type="protein sequence ID" value="BAB23962.1"/>
    <property type="molecule type" value="mRNA"/>
</dbReference>
<dbReference type="EMBL" id="AK007538">
    <property type="protein sequence ID" value="BAB25097.1"/>
    <property type="molecule type" value="mRNA"/>
</dbReference>
<dbReference type="EMBL" id="AK007720">
    <property type="protein sequence ID" value="BAB25211.1"/>
    <property type="molecule type" value="mRNA"/>
</dbReference>
<dbReference type="EMBL" id="AK010565">
    <property type="protein sequence ID" value="BAB27030.1"/>
    <property type="molecule type" value="mRNA"/>
</dbReference>
<dbReference type="EMBL" id="AK020145">
    <property type="protein sequence ID" value="BAB32009.1"/>
    <property type="molecule type" value="mRNA"/>
</dbReference>
<dbReference type="EMBL" id="AK050505">
    <property type="protein sequence ID" value="BAC34295.1"/>
    <property type="molecule type" value="mRNA"/>
</dbReference>
<dbReference type="EMBL" id="AK084530">
    <property type="protein sequence ID" value="BAC39212.1"/>
    <property type="molecule type" value="mRNA"/>
</dbReference>
<dbReference type="EMBL" id="BC010214">
    <property type="protein sequence ID" value="AAH10214.1"/>
    <property type="molecule type" value="mRNA"/>
</dbReference>
<dbReference type="CCDS" id="CCDS17480.1"/>
<dbReference type="RefSeq" id="NP_001343246.1">
    <property type="nucleotide sequence ID" value="NM_001356317.1"/>
</dbReference>
<dbReference type="RefSeq" id="NP_079724.1">
    <property type="nucleotide sequence ID" value="NM_025448.4"/>
</dbReference>
<dbReference type="RefSeq" id="XP_006501941.1">
    <property type="nucleotide sequence ID" value="XM_006501878.2"/>
</dbReference>
<dbReference type="SMR" id="Q9CPW5"/>
<dbReference type="BioGRID" id="211331">
    <property type="interactions" value="1"/>
</dbReference>
<dbReference type="FunCoup" id="Q9CPW5">
    <property type="interactions" value="1267"/>
</dbReference>
<dbReference type="STRING" id="10090.ENSMUSP00000045456"/>
<dbReference type="GlyConnect" id="2780">
    <property type="glycosylation" value="7 N-Linked glycans (2 sites)"/>
</dbReference>
<dbReference type="GlyCosmos" id="Q9CPW5">
    <property type="glycosylation" value="2 sites, 6 glycans"/>
</dbReference>
<dbReference type="GlyGen" id="Q9CPW5">
    <property type="glycosylation" value="2 sites, 8 N-linked glycans (2 sites)"/>
</dbReference>
<dbReference type="iPTMnet" id="Q9CPW5"/>
<dbReference type="PhosphoSitePlus" id="Q9CPW5"/>
<dbReference type="jPOST" id="Q9CPW5"/>
<dbReference type="PaxDb" id="10090-ENSMUSP00000045456"/>
<dbReference type="PeptideAtlas" id="Q9CPW5"/>
<dbReference type="ProteomicsDB" id="257080"/>
<dbReference type="Pumba" id="Q9CPW5"/>
<dbReference type="TopDownProteomics" id="Q9CPW5"/>
<dbReference type="Antibodypedia" id="20426">
    <property type="antibodies" value="185 antibodies from 26 providers"/>
</dbReference>
<dbReference type="DNASU" id="66256"/>
<dbReference type="Ensembl" id="ENSMUST00000035785.9">
    <property type="protein sequence ID" value="ENSMUSP00000045456.8"/>
    <property type="gene ID" value="ENSMUSG00000041355.14"/>
</dbReference>
<dbReference type="Ensembl" id="ENSMUST00000195014.6">
    <property type="protein sequence ID" value="ENSMUSP00000141441.2"/>
    <property type="gene ID" value="ENSMUSG00000041355.14"/>
</dbReference>
<dbReference type="GeneID" id="66256"/>
<dbReference type="KEGG" id="mmu:66256"/>
<dbReference type="UCSC" id="uc008pvs.1">
    <property type="organism name" value="mouse"/>
</dbReference>
<dbReference type="AGR" id="MGI:1913506"/>
<dbReference type="CTD" id="6746"/>
<dbReference type="MGI" id="MGI:1913506">
    <property type="gene designation" value="Ssr2"/>
</dbReference>
<dbReference type="VEuPathDB" id="HostDB:ENSMUSG00000041355"/>
<dbReference type="eggNOG" id="KOG3317">
    <property type="taxonomic scope" value="Eukaryota"/>
</dbReference>
<dbReference type="GeneTree" id="ENSGT00390000005125"/>
<dbReference type="HOGENOM" id="CLU_102025_1_0_1"/>
<dbReference type="InParanoid" id="Q9CPW5"/>
<dbReference type="OMA" id="ILWHSSK"/>
<dbReference type="PhylomeDB" id="Q9CPW5"/>
<dbReference type="TreeFam" id="TF314461"/>
<dbReference type="BioGRID-ORCS" id="66256">
    <property type="hits" value="4 hits in 77 CRISPR screens"/>
</dbReference>
<dbReference type="ChiTaRS" id="Ssr2">
    <property type="organism name" value="mouse"/>
</dbReference>
<dbReference type="PRO" id="PR:Q9CPW5"/>
<dbReference type="Proteomes" id="UP000000589">
    <property type="component" value="Chromosome 3"/>
</dbReference>
<dbReference type="RNAct" id="Q9CPW5">
    <property type="molecule type" value="protein"/>
</dbReference>
<dbReference type="Bgee" id="ENSMUSG00000041355">
    <property type="expression patterns" value="Expressed in yolk sac and 280 other cell types or tissues"/>
</dbReference>
<dbReference type="ExpressionAtlas" id="Q9CPW5">
    <property type="expression patterns" value="baseline and differential"/>
</dbReference>
<dbReference type="GO" id="GO:0005789">
    <property type="term" value="C:endoplasmic reticulum membrane"/>
    <property type="evidence" value="ECO:0007669"/>
    <property type="project" value="UniProtKB-SubCell"/>
</dbReference>
<dbReference type="GO" id="GO:0001701">
    <property type="term" value="P:in utero embryonic development"/>
    <property type="evidence" value="ECO:0000315"/>
    <property type="project" value="MGI"/>
</dbReference>
<dbReference type="InterPro" id="IPR008856">
    <property type="entry name" value="TRAP_beta"/>
</dbReference>
<dbReference type="PANTHER" id="PTHR12861:SF3">
    <property type="entry name" value="TRANSLOCON-ASSOCIATED PROTEIN SUBUNIT BETA"/>
    <property type="match status" value="1"/>
</dbReference>
<dbReference type="PANTHER" id="PTHR12861">
    <property type="entry name" value="TRANSLOCON-ASSOCIATED PROTEIN, BETA SUBUNIT PRECURSOR TRAP-BETA SIGNAL SEQUENCE RECEPTOR BETA SUBUNIT"/>
    <property type="match status" value="1"/>
</dbReference>
<dbReference type="Pfam" id="PF05753">
    <property type="entry name" value="TRAP_beta"/>
    <property type="match status" value="1"/>
</dbReference>
<dbReference type="PIRSF" id="PIRSF016400">
    <property type="entry name" value="TRAP_beta"/>
    <property type="match status" value="1"/>
</dbReference>
<reference key="1">
    <citation type="journal article" date="2005" name="Science">
        <title>The transcriptional landscape of the mammalian genome.</title>
        <authorList>
            <person name="Carninci P."/>
            <person name="Kasukawa T."/>
            <person name="Katayama S."/>
            <person name="Gough J."/>
            <person name="Frith M.C."/>
            <person name="Maeda N."/>
            <person name="Oyama R."/>
            <person name="Ravasi T."/>
            <person name="Lenhard B."/>
            <person name="Wells C."/>
            <person name="Kodzius R."/>
            <person name="Shimokawa K."/>
            <person name="Bajic V.B."/>
            <person name="Brenner S.E."/>
            <person name="Batalov S."/>
            <person name="Forrest A.R."/>
            <person name="Zavolan M."/>
            <person name="Davis M.J."/>
            <person name="Wilming L.G."/>
            <person name="Aidinis V."/>
            <person name="Allen J.E."/>
            <person name="Ambesi-Impiombato A."/>
            <person name="Apweiler R."/>
            <person name="Aturaliya R.N."/>
            <person name="Bailey T.L."/>
            <person name="Bansal M."/>
            <person name="Baxter L."/>
            <person name="Beisel K.W."/>
            <person name="Bersano T."/>
            <person name="Bono H."/>
            <person name="Chalk A.M."/>
            <person name="Chiu K.P."/>
            <person name="Choudhary V."/>
            <person name="Christoffels A."/>
            <person name="Clutterbuck D.R."/>
            <person name="Crowe M.L."/>
            <person name="Dalla E."/>
            <person name="Dalrymple B.P."/>
            <person name="de Bono B."/>
            <person name="Della Gatta G."/>
            <person name="di Bernardo D."/>
            <person name="Down T."/>
            <person name="Engstrom P."/>
            <person name="Fagiolini M."/>
            <person name="Faulkner G."/>
            <person name="Fletcher C.F."/>
            <person name="Fukushima T."/>
            <person name="Furuno M."/>
            <person name="Futaki S."/>
            <person name="Gariboldi M."/>
            <person name="Georgii-Hemming P."/>
            <person name="Gingeras T.R."/>
            <person name="Gojobori T."/>
            <person name="Green R.E."/>
            <person name="Gustincich S."/>
            <person name="Harbers M."/>
            <person name="Hayashi Y."/>
            <person name="Hensch T.K."/>
            <person name="Hirokawa N."/>
            <person name="Hill D."/>
            <person name="Huminiecki L."/>
            <person name="Iacono M."/>
            <person name="Ikeo K."/>
            <person name="Iwama A."/>
            <person name="Ishikawa T."/>
            <person name="Jakt M."/>
            <person name="Kanapin A."/>
            <person name="Katoh M."/>
            <person name="Kawasawa Y."/>
            <person name="Kelso J."/>
            <person name="Kitamura H."/>
            <person name="Kitano H."/>
            <person name="Kollias G."/>
            <person name="Krishnan S.P."/>
            <person name="Kruger A."/>
            <person name="Kummerfeld S.K."/>
            <person name="Kurochkin I.V."/>
            <person name="Lareau L.F."/>
            <person name="Lazarevic D."/>
            <person name="Lipovich L."/>
            <person name="Liu J."/>
            <person name="Liuni S."/>
            <person name="McWilliam S."/>
            <person name="Madan Babu M."/>
            <person name="Madera M."/>
            <person name="Marchionni L."/>
            <person name="Matsuda H."/>
            <person name="Matsuzawa S."/>
            <person name="Miki H."/>
            <person name="Mignone F."/>
            <person name="Miyake S."/>
            <person name="Morris K."/>
            <person name="Mottagui-Tabar S."/>
            <person name="Mulder N."/>
            <person name="Nakano N."/>
            <person name="Nakauchi H."/>
            <person name="Ng P."/>
            <person name="Nilsson R."/>
            <person name="Nishiguchi S."/>
            <person name="Nishikawa S."/>
            <person name="Nori F."/>
            <person name="Ohara O."/>
            <person name="Okazaki Y."/>
            <person name="Orlando V."/>
            <person name="Pang K.C."/>
            <person name="Pavan W.J."/>
            <person name="Pavesi G."/>
            <person name="Pesole G."/>
            <person name="Petrovsky N."/>
            <person name="Piazza S."/>
            <person name="Reed J."/>
            <person name="Reid J.F."/>
            <person name="Ring B.Z."/>
            <person name="Ringwald M."/>
            <person name="Rost B."/>
            <person name="Ruan Y."/>
            <person name="Salzberg S.L."/>
            <person name="Sandelin A."/>
            <person name="Schneider C."/>
            <person name="Schoenbach C."/>
            <person name="Sekiguchi K."/>
            <person name="Semple C.A."/>
            <person name="Seno S."/>
            <person name="Sessa L."/>
            <person name="Sheng Y."/>
            <person name="Shibata Y."/>
            <person name="Shimada H."/>
            <person name="Shimada K."/>
            <person name="Silva D."/>
            <person name="Sinclair B."/>
            <person name="Sperling S."/>
            <person name="Stupka E."/>
            <person name="Sugiura K."/>
            <person name="Sultana R."/>
            <person name="Takenaka Y."/>
            <person name="Taki K."/>
            <person name="Tammoja K."/>
            <person name="Tan S.L."/>
            <person name="Tang S."/>
            <person name="Taylor M.S."/>
            <person name="Tegner J."/>
            <person name="Teichmann S.A."/>
            <person name="Ueda H.R."/>
            <person name="van Nimwegen E."/>
            <person name="Verardo R."/>
            <person name="Wei C.L."/>
            <person name="Yagi K."/>
            <person name="Yamanishi H."/>
            <person name="Zabarovsky E."/>
            <person name="Zhu S."/>
            <person name="Zimmer A."/>
            <person name="Hide W."/>
            <person name="Bult C."/>
            <person name="Grimmond S.M."/>
            <person name="Teasdale R.D."/>
            <person name="Liu E.T."/>
            <person name="Brusic V."/>
            <person name="Quackenbush J."/>
            <person name="Wahlestedt C."/>
            <person name="Mattick J.S."/>
            <person name="Hume D.A."/>
            <person name="Kai C."/>
            <person name="Sasaki D."/>
            <person name="Tomaru Y."/>
            <person name="Fukuda S."/>
            <person name="Kanamori-Katayama M."/>
            <person name="Suzuki M."/>
            <person name="Aoki J."/>
            <person name="Arakawa T."/>
            <person name="Iida J."/>
            <person name="Imamura K."/>
            <person name="Itoh M."/>
            <person name="Kato T."/>
            <person name="Kawaji H."/>
            <person name="Kawagashira N."/>
            <person name="Kawashima T."/>
            <person name="Kojima M."/>
            <person name="Kondo S."/>
            <person name="Konno H."/>
            <person name="Nakano K."/>
            <person name="Ninomiya N."/>
            <person name="Nishio T."/>
            <person name="Okada M."/>
            <person name="Plessy C."/>
            <person name="Shibata K."/>
            <person name="Shiraki T."/>
            <person name="Suzuki S."/>
            <person name="Tagami M."/>
            <person name="Waki K."/>
            <person name="Watahiki A."/>
            <person name="Okamura-Oho Y."/>
            <person name="Suzuki H."/>
            <person name="Kawai J."/>
            <person name="Hayashizaki Y."/>
        </authorList>
    </citation>
    <scope>NUCLEOTIDE SEQUENCE [LARGE SCALE MRNA]</scope>
    <source>
        <strain>C57BL/6J</strain>
        <tissue>Cerebellum</tissue>
        <tissue>Embryonic heart</tissue>
        <tissue>Embryonic stem cell</tissue>
        <tissue>Pancreas</tissue>
    </source>
</reference>
<reference key="2">
    <citation type="journal article" date="2004" name="Genome Res.">
        <title>The status, quality, and expansion of the NIH full-length cDNA project: the Mammalian Gene Collection (MGC).</title>
        <authorList>
            <consortium name="The MGC Project Team"/>
        </authorList>
    </citation>
    <scope>NUCLEOTIDE SEQUENCE [LARGE SCALE MRNA]</scope>
    <source>
        <strain>FVB/N</strain>
        <tissue>Mammary tumor</tissue>
    </source>
</reference>
<reference key="3">
    <citation type="journal article" date="2005" name="Mol. Cell. Proteomics">
        <title>High throughput quantitative glycomics and glycoform-focused proteomics of murine dermis and epidermis.</title>
        <authorList>
            <person name="Uematsu R."/>
            <person name="Furukawa J."/>
            <person name="Nakagawa H."/>
            <person name="Shinohara Y."/>
            <person name="Deguchi K."/>
            <person name="Monde K."/>
            <person name="Nishimura S."/>
        </authorList>
    </citation>
    <scope>GLYCOSYLATION [LARGE SCALE ANALYSIS] AT ASN-88</scope>
    <source>
        <tissue>Epidermis</tissue>
    </source>
</reference>
<reference key="4">
    <citation type="journal article" date="2009" name="Nat. Biotechnol.">
        <title>Mass-spectrometric identification and relative quantification of N-linked cell surface glycoproteins.</title>
        <authorList>
            <person name="Wollscheid B."/>
            <person name="Bausch-Fluck D."/>
            <person name="Henderson C."/>
            <person name="O'Brien R."/>
            <person name="Bibel M."/>
            <person name="Schiess R."/>
            <person name="Aebersold R."/>
            <person name="Watts J.D."/>
        </authorList>
    </citation>
    <scope>GLYCOSYLATION [LARGE SCALE ANALYSIS] AT ASN-88</scope>
</reference>
<reference key="5">
    <citation type="journal article" date="2010" name="Cell">
        <title>A tissue-specific atlas of mouse protein phosphorylation and expression.</title>
        <authorList>
            <person name="Huttlin E.L."/>
            <person name="Jedrychowski M.P."/>
            <person name="Elias J.E."/>
            <person name="Goswami T."/>
            <person name="Rad R."/>
            <person name="Beausoleil S.A."/>
            <person name="Villen J."/>
            <person name="Haas W."/>
            <person name="Sowa M.E."/>
            <person name="Gygi S.P."/>
        </authorList>
    </citation>
    <scope>IDENTIFICATION BY MASS SPECTROMETRY [LARGE SCALE ANALYSIS]</scope>
    <source>
        <tissue>Pancreas</tissue>
    </source>
</reference>
<proteinExistence type="evidence at protein level"/>
<protein>
    <recommendedName>
        <fullName>Translocon-associated protein subunit beta</fullName>
        <shortName>TRAP-beta</shortName>
    </recommendedName>
    <alternativeName>
        <fullName>Signal sequence receptor subunit beta</fullName>
        <shortName>SSR-beta</shortName>
    </alternativeName>
</protein>
<name>SSRB_MOUSE</name>